<sequence length="264" mass="30428">MYQYLDLMRHVLQYGHKKSDRTGTGTLSVFGYQMRFDLQTGFPLVTTKKCHVKSIIHELLWFLRGETNIDYLKRNGVSIWDEWADENGDLGPIYGHQWRSWAASDGTVIDQISQVIQQIKETPDSRRMIVSAWNVGDLDKMKLAPCHVLFQFYVADGRLSCQLYQRSADIFLGVPFNIASYSLLTLMIAQCCDLQPGEFVHTFGDAHLYLNHLEQARLQLEREPRALPAMQLNSTVRNIFDFGYEDFTLHDYDPYPPIKAPVAV</sequence>
<dbReference type="EC" id="2.1.1.45" evidence="1"/>
<dbReference type="EMBL" id="AL954747">
    <property type="protein sequence ID" value="CAD84479.1"/>
    <property type="molecule type" value="Genomic_DNA"/>
</dbReference>
<dbReference type="RefSeq" id="WP_011111194.1">
    <property type="nucleotide sequence ID" value="NC_004757.1"/>
</dbReference>
<dbReference type="SMR" id="Q82WU3"/>
<dbReference type="STRING" id="228410.NE0568"/>
<dbReference type="GeneID" id="87103768"/>
<dbReference type="KEGG" id="neu:NE0568"/>
<dbReference type="eggNOG" id="COG0207">
    <property type="taxonomic scope" value="Bacteria"/>
</dbReference>
<dbReference type="HOGENOM" id="CLU_021669_0_0_4"/>
<dbReference type="OrthoDB" id="9774633at2"/>
<dbReference type="PhylomeDB" id="Q82WU3"/>
<dbReference type="UniPathway" id="UPA00575"/>
<dbReference type="Proteomes" id="UP000001416">
    <property type="component" value="Chromosome"/>
</dbReference>
<dbReference type="GO" id="GO:0005829">
    <property type="term" value="C:cytosol"/>
    <property type="evidence" value="ECO:0007669"/>
    <property type="project" value="TreeGrafter"/>
</dbReference>
<dbReference type="GO" id="GO:0004799">
    <property type="term" value="F:thymidylate synthase activity"/>
    <property type="evidence" value="ECO:0007669"/>
    <property type="project" value="UniProtKB-UniRule"/>
</dbReference>
<dbReference type="GO" id="GO:0006231">
    <property type="term" value="P:dTMP biosynthetic process"/>
    <property type="evidence" value="ECO:0007669"/>
    <property type="project" value="UniProtKB-UniRule"/>
</dbReference>
<dbReference type="GO" id="GO:0006235">
    <property type="term" value="P:dTTP biosynthetic process"/>
    <property type="evidence" value="ECO:0007669"/>
    <property type="project" value="UniProtKB-UniRule"/>
</dbReference>
<dbReference type="GO" id="GO:0032259">
    <property type="term" value="P:methylation"/>
    <property type="evidence" value="ECO:0007669"/>
    <property type="project" value="UniProtKB-KW"/>
</dbReference>
<dbReference type="CDD" id="cd00351">
    <property type="entry name" value="TS_Pyrimidine_HMase"/>
    <property type="match status" value="1"/>
</dbReference>
<dbReference type="FunFam" id="3.30.572.10:FF:000001">
    <property type="entry name" value="Thymidylate synthase"/>
    <property type="match status" value="1"/>
</dbReference>
<dbReference type="Gene3D" id="3.30.572.10">
    <property type="entry name" value="Thymidylate synthase/dCMP hydroxymethylase domain"/>
    <property type="match status" value="1"/>
</dbReference>
<dbReference type="HAMAP" id="MF_00008">
    <property type="entry name" value="Thymidy_synth_bact"/>
    <property type="match status" value="1"/>
</dbReference>
<dbReference type="InterPro" id="IPR045097">
    <property type="entry name" value="Thymidate_synth/dCMP_Mease"/>
</dbReference>
<dbReference type="InterPro" id="IPR023451">
    <property type="entry name" value="Thymidate_synth/dCMP_Mease_dom"/>
</dbReference>
<dbReference type="InterPro" id="IPR036926">
    <property type="entry name" value="Thymidate_synth/dCMP_Mease_sf"/>
</dbReference>
<dbReference type="InterPro" id="IPR000398">
    <property type="entry name" value="Thymidylate_synthase"/>
</dbReference>
<dbReference type="InterPro" id="IPR020940">
    <property type="entry name" value="Thymidylate_synthase_AS"/>
</dbReference>
<dbReference type="NCBIfam" id="NF002497">
    <property type="entry name" value="PRK01827.1-3"/>
    <property type="match status" value="1"/>
</dbReference>
<dbReference type="NCBIfam" id="NF002499">
    <property type="entry name" value="PRK01827.1-5"/>
    <property type="match status" value="1"/>
</dbReference>
<dbReference type="NCBIfam" id="TIGR03284">
    <property type="entry name" value="thym_sym"/>
    <property type="match status" value="2"/>
</dbReference>
<dbReference type="PANTHER" id="PTHR11548:SF9">
    <property type="entry name" value="THYMIDYLATE SYNTHASE"/>
    <property type="match status" value="1"/>
</dbReference>
<dbReference type="PANTHER" id="PTHR11548">
    <property type="entry name" value="THYMIDYLATE SYNTHASE 1"/>
    <property type="match status" value="1"/>
</dbReference>
<dbReference type="Pfam" id="PF00303">
    <property type="entry name" value="Thymidylat_synt"/>
    <property type="match status" value="1"/>
</dbReference>
<dbReference type="PRINTS" id="PR00108">
    <property type="entry name" value="THYMDSNTHASE"/>
</dbReference>
<dbReference type="SUPFAM" id="SSF55831">
    <property type="entry name" value="Thymidylate synthase/dCMP hydroxymethylase"/>
    <property type="match status" value="1"/>
</dbReference>
<dbReference type="PROSITE" id="PS00091">
    <property type="entry name" value="THYMIDYLATE_SYNTHASE"/>
    <property type="match status" value="1"/>
</dbReference>
<protein>
    <recommendedName>
        <fullName evidence="1">Thymidylate synthase</fullName>
        <shortName evidence="1">TS</shortName>
        <shortName evidence="1">TSase</shortName>
        <ecNumber evidence="1">2.1.1.45</ecNumber>
    </recommendedName>
</protein>
<proteinExistence type="inferred from homology"/>
<organism>
    <name type="scientific">Nitrosomonas europaea (strain ATCC 19718 / CIP 103999 / KCTC 2705 / NBRC 14298)</name>
    <dbReference type="NCBI Taxonomy" id="228410"/>
    <lineage>
        <taxon>Bacteria</taxon>
        <taxon>Pseudomonadati</taxon>
        <taxon>Pseudomonadota</taxon>
        <taxon>Betaproteobacteria</taxon>
        <taxon>Nitrosomonadales</taxon>
        <taxon>Nitrosomonadaceae</taxon>
        <taxon>Nitrosomonas</taxon>
    </lineage>
</organism>
<comment type="function">
    <text evidence="1">Catalyzes the reductive methylation of 2'-deoxyuridine-5'-monophosphate (dUMP) to 2'-deoxythymidine-5'-monophosphate (dTMP) while utilizing 5,10-methylenetetrahydrofolate (mTHF) as the methyl donor and reductant in the reaction, yielding dihydrofolate (DHF) as a by-product. This enzymatic reaction provides an intracellular de novo source of dTMP, an essential precursor for DNA biosynthesis.</text>
</comment>
<comment type="catalytic activity">
    <reaction evidence="1">
        <text>dUMP + (6R)-5,10-methylene-5,6,7,8-tetrahydrofolate = 7,8-dihydrofolate + dTMP</text>
        <dbReference type="Rhea" id="RHEA:12104"/>
        <dbReference type="ChEBI" id="CHEBI:15636"/>
        <dbReference type="ChEBI" id="CHEBI:57451"/>
        <dbReference type="ChEBI" id="CHEBI:63528"/>
        <dbReference type="ChEBI" id="CHEBI:246422"/>
        <dbReference type="EC" id="2.1.1.45"/>
    </reaction>
</comment>
<comment type="pathway">
    <text evidence="1">Pyrimidine metabolism; dTTP biosynthesis.</text>
</comment>
<comment type="subunit">
    <text evidence="1">Homodimer.</text>
</comment>
<comment type="subcellular location">
    <subcellularLocation>
        <location evidence="1">Cytoplasm</location>
    </subcellularLocation>
</comment>
<comment type="similarity">
    <text evidence="1">Belongs to the thymidylate synthase family. Bacterial-type ThyA subfamily.</text>
</comment>
<gene>
    <name evidence="1" type="primary">thyA</name>
    <name type="ordered locus">NE0568</name>
</gene>
<reference key="1">
    <citation type="journal article" date="2003" name="J. Bacteriol.">
        <title>Complete genome sequence of the ammonia-oxidizing bacterium and obligate chemolithoautotroph Nitrosomonas europaea.</title>
        <authorList>
            <person name="Chain P."/>
            <person name="Lamerdin J.E."/>
            <person name="Larimer F.W."/>
            <person name="Regala W."/>
            <person name="Lao V."/>
            <person name="Land M.L."/>
            <person name="Hauser L."/>
            <person name="Hooper A.B."/>
            <person name="Klotz M.G."/>
            <person name="Norton J."/>
            <person name="Sayavedra-Soto L.A."/>
            <person name="Arciero D.M."/>
            <person name="Hommes N.G."/>
            <person name="Whittaker M.M."/>
            <person name="Arp D.J."/>
        </authorList>
    </citation>
    <scope>NUCLEOTIDE SEQUENCE [LARGE SCALE GENOMIC DNA]</scope>
    <source>
        <strain>ATCC 19718 / CIP 103999 / KCTC 2705 / NBRC 14298</strain>
    </source>
</reference>
<feature type="chain" id="PRO_0000140995" description="Thymidylate synthase">
    <location>
        <begin position="1"/>
        <end position="264"/>
    </location>
</feature>
<feature type="active site" description="Nucleophile" evidence="1">
    <location>
        <position position="146"/>
    </location>
</feature>
<feature type="binding site" description="in other chain" evidence="1">
    <location>
        <position position="21"/>
    </location>
    <ligand>
        <name>dUMP</name>
        <dbReference type="ChEBI" id="CHEBI:246422"/>
        <note>ligand shared between dimeric partners</note>
    </ligand>
</feature>
<feature type="binding site" evidence="1">
    <location>
        <position position="51"/>
    </location>
    <ligand>
        <name>(6R)-5,10-methylene-5,6,7,8-tetrahydrofolate</name>
        <dbReference type="ChEBI" id="CHEBI:15636"/>
    </ligand>
</feature>
<feature type="binding site" evidence="1">
    <location>
        <begin position="126"/>
        <end position="127"/>
    </location>
    <ligand>
        <name>dUMP</name>
        <dbReference type="ChEBI" id="CHEBI:246422"/>
        <note>ligand shared between dimeric partners</note>
    </ligand>
</feature>
<feature type="binding site" description="in other chain" evidence="1">
    <location>
        <begin position="166"/>
        <end position="169"/>
    </location>
    <ligand>
        <name>dUMP</name>
        <dbReference type="ChEBI" id="CHEBI:246422"/>
        <note>ligand shared between dimeric partners</note>
    </ligand>
</feature>
<feature type="binding site" evidence="1">
    <location>
        <position position="169"/>
    </location>
    <ligand>
        <name>(6R)-5,10-methylene-5,6,7,8-tetrahydrofolate</name>
        <dbReference type="ChEBI" id="CHEBI:15636"/>
    </ligand>
</feature>
<feature type="binding site" description="in other chain" evidence="1">
    <location>
        <position position="177"/>
    </location>
    <ligand>
        <name>dUMP</name>
        <dbReference type="ChEBI" id="CHEBI:246422"/>
        <note>ligand shared between dimeric partners</note>
    </ligand>
</feature>
<feature type="binding site" description="in other chain" evidence="1">
    <location>
        <begin position="207"/>
        <end position="209"/>
    </location>
    <ligand>
        <name>dUMP</name>
        <dbReference type="ChEBI" id="CHEBI:246422"/>
        <note>ligand shared between dimeric partners</note>
    </ligand>
</feature>
<feature type="binding site" evidence="1">
    <location>
        <position position="263"/>
    </location>
    <ligand>
        <name>(6R)-5,10-methylene-5,6,7,8-tetrahydrofolate</name>
        <dbReference type="ChEBI" id="CHEBI:15636"/>
    </ligand>
</feature>
<name>TYSY_NITEU</name>
<accession>Q82WU3</accession>
<evidence type="ECO:0000255" key="1">
    <source>
        <dbReference type="HAMAP-Rule" id="MF_00008"/>
    </source>
</evidence>
<keyword id="KW-0963">Cytoplasm</keyword>
<keyword id="KW-0489">Methyltransferase</keyword>
<keyword id="KW-0545">Nucleotide biosynthesis</keyword>
<keyword id="KW-1185">Reference proteome</keyword>
<keyword id="KW-0808">Transferase</keyword>